<keyword id="KW-0001">2Fe-2S</keyword>
<keyword id="KW-0004">4Fe-4S</keyword>
<keyword id="KW-0093">Biotin biosynthesis</keyword>
<keyword id="KW-0408">Iron</keyword>
<keyword id="KW-0411">Iron-sulfur</keyword>
<keyword id="KW-0479">Metal-binding</keyword>
<keyword id="KW-0949">S-adenosyl-L-methionine</keyword>
<keyword id="KW-0808">Transferase</keyword>
<feature type="chain" id="PRO_0000381328" description="Biotin synthase">
    <location>
        <begin position="1"/>
        <end position="334"/>
    </location>
</feature>
<feature type="domain" description="Radical SAM core" evidence="2">
    <location>
        <begin position="55"/>
        <end position="280"/>
    </location>
</feature>
<feature type="binding site" evidence="1">
    <location>
        <position position="70"/>
    </location>
    <ligand>
        <name>[4Fe-4S] cluster</name>
        <dbReference type="ChEBI" id="CHEBI:49883"/>
        <note>4Fe-4S-S-AdoMet</note>
    </ligand>
</feature>
<feature type="binding site" evidence="1">
    <location>
        <position position="74"/>
    </location>
    <ligand>
        <name>[4Fe-4S] cluster</name>
        <dbReference type="ChEBI" id="CHEBI:49883"/>
        <note>4Fe-4S-S-AdoMet</note>
    </ligand>
</feature>
<feature type="binding site" evidence="1">
    <location>
        <position position="77"/>
    </location>
    <ligand>
        <name>[4Fe-4S] cluster</name>
        <dbReference type="ChEBI" id="CHEBI:49883"/>
        <note>4Fe-4S-S-AdoMet</note>
    </ligand>
</feature>
<feature type="binding site" evidence="1">
    <location>
        <position position="113"/>
    </location>
    <ligand>
        <name>[2Fe-2S] cluster</name>
        <dbReference type="ChEBI" id="CHEBI:190135"/>
    </ligand>
</feature>
<feature type="binding site" evidence="1">
    <location>
        <position position="205"/>
    </location>
    <ligand>
        <name>[2Fe-2S] cluster</name>
        <dbReference type="ChEBI" id="CHEBI:190135"/>
    </ligand>
</feature>
<feature type="binding site" evidence="1">
    <location>
        <position position="275"/>
    </location>
    <ligand>
        <name>[2Fe-2S] cluster</name>
        <dbReference type="ChEBI" id="CHEBI:190135"/>
    </ligand>
</feature>
<proteinExistence type="inferred from homology"/>
<dbReference type="EC" id="2.8.1.6" evidence="1"/>
<dbReference type="EMBL" id="AP009044">
    <property type="protein sequence ID" value="BAF53053.1"/>
    <property type="molecule type" value="Genomic_DNA"/>
</dbReference>
<dbReference type="RefSeq" id="WP_003855421.1">
    <property type="nucleotide sequence ID" value="NC_009342.1"/>
</dbReference>
<dbReference type="SMR" id="A4QA10"/>
<dbReference type="KEGG" id="cgt:cgR_0092"/>
<dbReference type="HOGENOM" id="CLU_033172_2_1_11"/>
<dbReference type="PhylomeDB" id="A4QA10"/>
<dbReference type="UniPathway" id="UPA00078">
    <property type="reaction ID" value="UER00162"/>
</dbReference>
<dbReference type="Proteomes" id="UP000006698">
    <property type="component" value="Chromosome"/>
</dbReference>
<dbReference type="GO" id="GO:0051537">
    <property type="term" value="F:2 iron, 2 sulfur cluster binding"/>
    <property type="evidence" value="ECO:0007669"/>
    <property type="project" value="UniProtKB-KW"/>
</dbReference>
<dbReference type="GO" id="GO:0051539">
    <property type="term" value="F:4 iron, 4 sulfur cluster binding"/>
    <property type="evidence" value="ECO:0007669"/>
    <property type="project" value="UniProtKB-KW"/>
</dbReference>
<dbReference type="GO" id="GO:0004076">
    <property type="term" value="F:biotin synthase activity"/>
    <property type="evidence" value="ECO:0007669"/>
    <property type="project" value="UniProtKB-UniRule"/>
</dbReference>
<dbReference type="GO" id="GO:0005506">
    <property type="term" value="F:iron ion binding"/>
    <property type="evidence" value="ECO:0007669"/>
    <property type="project" value="UniProtKB-UniRule"/>
</dbReference>
<dbReference type="GO" id="GO:0009102">
    <property type="term" value="P:biotin biosynthetic process"/>
    <property type="evidence" value="ECO:0007669"/>
    <property type="project" value="UniProtKB-UniRule"/>
</dbReference>
<dbReference type="CDD" id="cd01335">
    <property type="entry name" value="Radical_SAM"/>
    <property type="match status" value="1"/>
</dbReference>
<dbReference type="FunFam" id="3.20.20.70:FF:000026">
    <property type="entry name" value="Biotin synthase"/>
    <property type="match status" value="1"/>
</dbReference>
<dbReference type="Gene3D" id="3.20.20.70">
    <property type="entry name" value="Aldolase class I"/>
    <property type="match status" value="1"/>
</dbReference>
<dbReference type="HAMAP" id="MF_01694">
    <property type="entry name" value="BioB"/>
    <property type="match status" value="1"/>
</dbReference>
<dbReference type="InterPro" id="IPR013785">
    <property type="entry name" value="Aldolase_TIM"/>
</dbReference>
<dbReference type="InterPro" id="IPR010722">
    <property type="entry name" value="BATS_dom"/>
</dbReference>
<dbReference type="InterPro" id="IPR002684">
    <property type="entry name" value="Biotin_synth/BioAB"/>
</dbReference>
<dbReference type="InterPro" id="IPR024177">
    <property type="entry name" value="Biotin_synthase"/>
</dbReference>
<dbReference type="InterPro" id="IPR006638">
    <property type="entry name" value="Elp3/MiaA/NifB-like_rSAM"/>
</dbReference>
<dbReference type="InterPro" id="IPR007197">
    <property type="entry name" value="rSAM"/>
</dbReference>
<dbReference type="NCBIfam" id="TIGR00433">
    <property type="entry name" value="bioB"/>
    <property type="match status" value="1"/>
</dbReference>
<dbReference type="PANTHER" id="PTHR22976">
    <property type="entry name" value="BIOTIN SYNTHASE"/>
    <property type="match status" value="1"/>
</dbReference>
<dbReference type="PANTHER" id="PTHR22976:SF2">
    <property type="entry name" value="BIOTIN SYNTHASE, MITOCHONDRIAL"/>
    <property type="match status" value="1"/>
</dbReference>
<dbReference type="Pfam" id="PF06968">
    <property type="entry name" value="BATS"/>
    <property type="match status" value="1"/>
</dbReference>
<dbReference type="Pfam" id="PF04055">
    <property type="entry name" value="Radical_SAM"/>
    <property type="match status" value="1"/>
</dbReference>
<dbReference type="PIRSF" id="PIRSF001619">
    <property type="entry name" value="Biotin_synth"/>
    <property type="match status" value="1"/>
</dbReference>
<dbReference type="SFLD" id="SFLDG01082">
    <property type="entry name" value="B12-binding_domain_containing"/>
    <property type="match status" value="1"/>
</dbReference>
<dbReference type="SFLD" id="SFLDG01278">
    <property type="entry name" value="biotin_synthase_like"/>
    <property type="match status" value="1"/>
</dbReference>
<dbReference type="SFLD" id="SFLDS00029">
    <property type="entry name" value="Radical_SAM"/>
    <property type="match status" value="1"/>
</dbReference>
<dbReference type="SMART" id="SM00876">
    <property type="entry name" value="BATS"/>
    <property type="match status" value="1"/>
</dbReference>
<dbReference type="SMART" id="SM00729">
    <property type="entry name" value="Elp3"/>
    <property type="match status" value="1"/>
</dbReference>
<dbReference type="SUPFAM" id="SSF102114">
    <property type="entry name" value="Radical SAM enzymes"/>
    <property type="match status" value="1"/>
</dbReference>
<dbReference type="PROSITE" id="PS51918">
    <property type="entry name" value="RADICAL_SAM"/>
    <property type="match status" value="1"/>
</dbReference>
<protein>
    <recommendedName>
        <fullName evidence="1">Biotin synthase</fullName>
        <ecNumber evidence="1">2.8.1.6</ecNumber>
    </recommendedName>
</protein>
<name>BIOB_CORGB</name>
<sequence>MTIPATILDTARTQVLEQGIGLNQQQLMEVLTLPEEQIPDLMELAHQVRLKWCGEEIEVEGIISLKTGGCPEDCHFCSQSGLFESPVRSVWLDIPNLVEAAKQTAKTGATEFCIVAAVKGPDERLMTQLEEAVLAIHSEVEIEVAASIGTLNKEQVDRLAAAGVHRYNHNLETARSYFPEVVTTHTWEERRETLRLVAEAGMEVCSGGILGMGETLEQRAEFAVQLAELDPHEVPMNFLDPRPGTPFADRELMDSRDALRSIGAFRLAMPHTMLRFAGGRELTLGDKGSEQALLGGINAMIVGNYLTTLGRPMEDDLDMMDRLQLPIKVLNKVI</sequence>
<comment type="function">
    <text evidence="1">Catalyzes the conversion of dethiobiotin (DTB) to biotin by the insertion of a sulfur atom into dethiobiotin via a radical-based mechanism.</text>
</comment>
<comment type="catalytic activity">
    <reaction evidence="1">
        <text>(4R,5S)-dethiobiotin + (sulfur carrier)-SH + 2 reduced [2Fe-2S]-[ferredoxin] + 2 S-adenosyl-L-methionine = (sulfur carrier)-H + biotin + 2 5'-deoxyadenosine + 2 L-methionine + 2 oxidized [2Fe-2S]-[ferredoxin]</text>
        <dbReference type="Rhea" id="RHEA:22060"/>
        <dbReference type="Rhea" id="RHEA-COMP:10000"/>
        <dbReference type="Rhea" id="RHEA-COMP:10001"/>
        <dbReference type="Rhea" id="RHEA-COMP:14737"/>
        <dbReference type="Rhea" id="RHEA-COMP:14739"/>
        <dbReference type="ChEBI" id="CHEBI:17319"/>
        <dbReference type="ChEBI" id="CHEBI:29917"/>
        <dbReference type="ChEBI" id="CHEBI:33737"/>
        <dbReference type="ChEBI" id="CHEBI:33738"/>
        <dbReference type="ChEBI" id="CHEBI:57586"/>
        <dbReference type="ChEBI" id="CHEBI:57844"/>
        <dbReference type="ChEBI" id="CHEBI:59789"/>
        <dbReference type="ChEBI" id="CHEBI:64428"/>
        <dbReference type="ChEBI" id="CHEBI:149473"/>
        <dbReference type="EC" id="2.8.1.6"/>
    </reaction>
</comment>
<comment type="cofactor">
    <cofactor evidence="1">
        <name>[4Fe-4S] cluster</name>
        <dbReference type="ChEBI" id="CHEBI:49883"/>
    </cofactor>
    <text evidence="1">Binds 1 [4Fe-4S] cluster. The cluster is coordinated with 3 cysteines and an exchangeable S-adenosyl-L-methionine.</text>
</comment>
<comment type="cofactor">
    <cofactor evidence="1">
        <name>[2Fe-2S] cluster</name>
        <dbReference type="ChEBI" id="CHEBI:190135"/>
    </cofactor>
    <text evidence="1">Binds 1 [2Fe-2S] cluster. The cluster is coordinated with 3 cysteines and 1 arginine.</text>
</comment>
<comment type="pathway">
    <text evidence="1">Cofactor biosynthesis; biotin biosynthesis; biotin from 7,8-diaminononanoate: step 2/2.</text>
</comment>
<comment type="subunit">
    <text evidence="1">Homodimer.</text>
</comment>
<comment type="similarity">
    <text evidence="1">Belongs to the radical SAM superfamily. Biotin synthase family.</text>
</comment>
<gene>
    <name evidence="1" type="primary">bioB</name>
    <name type="ordered locus">cgR_0092</name>
</gene>
<evidence type="ECO:0000255" key="1">
    <source>
        <dbReference type="HAMAP-Rule" id="MF_01694"/>
    </source>
</evidence>
<evidence type="ECO:0000255" key="2">
    <source>
        <dbReference type="PROSITE-ProRule" id="PRU01266"/>
    </source>
</evidence>
<organism>
    <name type="scientific">Corynebacterium glutamicum (strain R)</name>
    <dbReference type="NCBI Taxonomy" id="340322"/>
    <lineage>
        <taxon>Bacteria</taxon>
        <taxon>Bacillati</taxon>
        <taxon>Actinomycetota</taxon>
        <taxon>Actinomycetes</taxon>
        <taxon>Mycobacteriales</taxon>
        <taxon>Corynebacteriaceae</taxon>
        <taxon>Corynebacterium</taxon>
    </lineage>
</organism>
<reference key="1">
    <citation type="journal article" date="2007" name="Microbiology">
        <title>Comparative analysis of the Corynebacterium glutamicum group and complete genome sequence of strain R.</title>
        <authorList>
            <person name="Yukawa H."/>
            <person name="Omumasaba C.A."/>
            <person name="Nonaka H."/>
            <person name="Kos P."/>
            <person name="Okai N."/>
            <person name="Suzuki N."/>
            <person name="Suda M."/>
            <person name="Tsuge Y."/>
            <person name="Watanabe J."/>
            <person name="Ikeda Y."/>
            <person name="Vertes A.A."/>
            <person name="Inui M."/>
        </authorList>
    </citation>
    <scope>NUCLEOTIDE SEQUENCE [LARGE SCALE GENOMIC DNA]</scope>
    <source>
        <strain>R</strain>
    </source>
</reference>
<accession>A4QA10</accession>